<name>HAKAI_MACFA</name>
<sequence>MDHTDNELQGTNSSGSLGGLDVRRRIPIKLISKQANKAKPAPRTQRTINRMPAKAPPGDEGFDYNEEERYDCKGGELFGNQRRFPGHLFWDFQINILGEKDDTPVHFCDKCGLPIKIYGRMIPCKHVFCYDCAILHEKKGDKMCPGCSDPVQRIEQCTRGSLFMCSIVQGCKRTYLSQRDLQAHINHRHMRAGKPVTRASLENVHPPIAPPPTEIPERFIMPPDKHHMSHIPPKQHIMMPPPPLQHVPHEHYNQPHEDIRAPPAELSMAPPPPRSVSQETFRISTRKHSNLITVPIQDDSNSGAREPPPPAPAPAHHHPEYQGQPVVSHPHHIMPPQQHYAPPPPPPPPISHPMPHPPQAAGTPHLVYSQAPPPPMTSAPPPITPPPGHIIAQMPPYMNHPPPGPPPPQHGGPPVTAPPPHHYNPNSLPQFTEDQGTLSPPFTQPGGMSPGIWPAPRGPPPPPRLQGPPSQTPLPGPHHPDQTRYRPYYQ</sequence>
<accession>Q4R7I8</accession>
<accession>Q4R6U4</accession>
<comment type="function">
    <text evidence="2">E3 ubiquitin-protein ligase that mediates ubiquitination of several tyrosine-phosphorylated Src substrates, including CDH1, CTTN and DOK1. Targets CDH1 for endocytosis and degradation. Associated component of the WMM complex, a complex that mediates N6-methyladenosine (m6A) methylation of RNAs, a modification that plays a role in the efficiency of mRNA splicing and RNA processing. Its function in the WMM complex is unknown.</text>
</comment>
<comment type="catalytic activity">
    <reaction evidence="2">
        <text>S-ubiquitinyl-[E2 ubiquitin-conjugating enzyme]-L-cysteine + [acceptor protein]-L-lysine = [E2 ubiquitin-conjugating enzyme]-L-cysteine + N(6)-ubiquitinyl-[acceptor protein]-L-lysine.</text>
        <dbReference type="EC" id="2.3.2.27"/>
    </reaction>
</comment>
<comment type="pathway">
    <text evidence="2">Protein modification; protein ubiquitination.</text>
</comment>
<comment type="subunit">
    <text evidence="1 2">Homodimer. Interacts with tyrosine-phosphorylated SRC substrates. Component of the WMM complex, a N6-methyltransferase complex composed of a catalytic subcomplex, named MAC, and of an associated subcomplex, named MACOM. The MAC subcomplex is composed of METTL3 and METTL14. The MACOM subcomplex is composed of WTAP, ZC3H13, CBLL1/HAKAI, VIRMA, and, in some cases of RBM15 (RBM15 or RBM15B) (By similarity). Also a component of a MACOM-like complex, named WTAP complex, composed of WTAP, ZC3H13, CBLL1, VIRMA, RBM15, BCLAF1 and THRAP3 (By similarity).</text>
</comment>
<comment type="subcellular location">
    <subcellularLocation>
        <location evidence="1">Nucleus speckle</location>
    </subcellularLocation>
    <subcellularLocation>
        <location evidence="2">Nucleus</location>
        <location evidence="2">Nucleoplasm</location>
    </subcellularLocation>
    <subcellularLocation>
        <location evidence="2">Cytoplasm</location>
    </subcellularLocation>
    <text evidence="2">Mainly nuclear with some fraction located in the cytoplasm. ZC3H13 is required to anchor component of the MACOM subcomplex, such as VIRMA, in the nucleus.</text>
</comment>
<comment type="alternative products">
    <event type="alternative splicing"/>
    <isoform>
        <id>Q4R7I8-1</id>
        <name>1</name>
        <sequence type="displayed"/>
    </isoform>
    <isoform>
        <id>Q4R7I8-2</id>
        <name>2</name>
        <sequence type="described" ref="VSP_024412 VSP_024413 VSP_024414"/>
    </isoform>
</comment>
<comment type="domain">
    <text evidence="2">The HYB domain forms a phosphotyrosine-binding pocket upon dimerization, and mediates as well the recognition of its flanking acidic amino acids.</text>
</comment>
<comment type="PTM">
    <text evidence="2">Phosphorylated on tyrosine residues.</text>
</comment>
<comment type="similarity">
    <text evidence="6">Belongs to the Hakai family.</text>
</comment>
<reference key="1">
    <citation type="submission" date="2005-06" db="EMBL/GenBank/DDBJ databases">
        <title>DNA sequences of macaque genes expressed in brain or testis and its evolutionary implications.</title>
        <authorList>
            <consortium name="International consortium for macaque cDNA sequencing and analysis"/>
        </authorList>
    </citation>
    <scope>NUCLEOTIDE SEQUENCE [LARGE SCALE MRNA] (ISOFORMS 1 AND 2)</scope>
    <source>
        <tissue>Testis</tissue>
    </source>
</reference>
<feature type="chain" id="PRO_0000284049" description="E3 ubiquitin-protein ligase Hakai">
    <location>
        <begin position="1"/>
        <end position="490"/>
    </location>
</feature>
<feature type="zinc finger region" description="RING-type" evidence="3">
    <location>
        <begin position="108"/>
        <end position="148"/>
    </location>
</feature>
<feature type="zinc finger region" description="C2H2-type">
    <location>
        <begin position="163"/>
        <end position="189"/>
    </location>
</feature>
<feature type="region of interest" description="Disordered" evidence="4">
    <location>
        <begin position="34"/>
        <end position="60"/>
    </location>
</feature>
<feature type="region of interest" description="HYB domain" evidence="2">
    <location>
        <begin position="147"/>
        <end position="205"/>
    </location>
</feature>
<feature type="region of interest" description="Disordered" evidence="4">
    <location>
        <begin position="254"/>
        <end position="490"/>
    </location>
</feature>
<feature type="compositionally biased region" description="Pro residues" evidence="4">
    <location>
        <begin position="341"/>
        <end position="358"/>
    </location>
</feature>
<feature type="compositionally biased region" description="Pro residues" evidence="4">
    <location>
        <begin position="371"/>
        <end position="388"/>
    </location>
</feature>
<feature type="compositionally biased region" description="Pro residues" evidence="4">
    <location>
        <begin position="398"/>
        <end position="422"/>
    </location>
</feature>
<feature type="compositionally biased region" description="Polar residues" evidence="4">
    <location>
        <begin position="426"/>
        <end position="441"/>
    </location>
</feature>
<feature type="compositionally biased region" description="Pro residues" evidence="4">
    <location>
        <begin position="456"/>
        <end position="477"/>
    </location>
</feature>
<feature type="modified residue" description="Phosphoserine" evidence="1">
    <location>
        <position position="200"/>
    </location>
</feature>
<feature type="modified residue" description="Phosphoserine" evidence="1">
    <location>
        <position position="284"/>
    </location>
</feature>
<feature type="modified residue" description="Phosphoserine" evidence="1">
    <location>
        <position position="289"/>
    </location>
</feature>
<feature type="splice variant" id="VSP_024412" description="In isoform 2." evidence="5">
    <location>
        <begin position="1"/>
        <end position="50"/>
    </location>
</feature>
<feature type="splice variant" id="VSP_024413" description="In isoform 2." evidence="5">
    <original>E</original>
    <variation>EE</variation>
    <location>
        <position position="60"/>
    </location>
</feature>
<feature type="splice variant" id="VSP_024414" description="In isoform 2." evidence="5">
    <location>
        <begin position="375"/>
        <end position="406"/>
    </location>
</feature>
<feature type="sequence conflict" description="In Ref. 1; BAE01180." evidence="6" ref="1">
    <original>E</original>
    <variation>G</variation>
    <location>
        <position position="265"/>
    </location>
</feature>
<keyword id="KW-0025">Alternative splicing</keyword>
<keyword id="KW-0963">Cytoplasm</keyword>
<keyword id="KW-0217">Developmental protein</keyword>
<keyword id="KW-0479">Metal-binding</keyword>
<keyword id="KW-0539">Nucleus</keyword>
<keyword id="KW-0597">Phosphoprotein</keyword>
<keyword id="KW-1185">Reference proteome</keyword>
<keyword id="KW-0808">Transferase</keyword>
<keyword id="KW-0833">Ubl conjugation pathway</keyword>
<keyword id="KW-0862">Zinc</keyword>
<keyword id="KW-0863">Zinc-finger</keyword>
<proteinExistence type="evidence at transcript level"/>
<protein>
    <recommendedName>
        <fullName evidence="6">E3 ubiquitin-protein ligase Hakai</fullName>
        <ecNumber evidence="2">2.3.2.27</ecNumber>
    </recommendedName>
    <alternativeName>
        <fullName evidence="2">Casitas B-lineage lymphoma-transforming sequence-like protein 1</fullName>
        <shortName evidence="2">c-Cbl-like protein 1</shortName>
    </alternativeName>
    <alternativeName>
        <fullName evidence="6">RING-type E3 ubiquitin transferase Hakai</fullName>
    </alternativeName>
</protein>
<evidence type="ECO:0000250" key="1">
    <source>
        <dbReference type="UniProtKB" id="Q75N03"/>
    </source>
</evidence>
<evidence type="ECO:0000250" key="2">
    <source>
        <dbReference type="UniProtKB" id="Q9JIY2"/>
    </source>
</evidence>
<evidence type="ECO:0000255" key="3">
    <source>
        <dbReference type="PROSITE-ProRule" id="PRU00175"/>
    </source>
</evidence>
<evidence type="ECO:0000256" key="4">
    <source>
        <dbReference type="SAM" id="MobiDB-lite"/>
    </source>
</evidence>
<evidence type="ECO:0000303" key="5">
    <source ref="1"/>
</evidence>
<evidence type="ECO:0000305" key="6"/>
<dbReference type="EC" id="2.3.2.27" evidence="2"/>
<dbReference type="EMBL" id="AB168830">
    <property type="protein sequence ID" value="BAE00934.1"/>
    <property type="molecule type" value="mRNA"/>
</dbReference>
<dbReference type="EMBL" id="AB169086">
    <property type="protein sequence ID" value="BAE01180.1"/>
    <property type="molecule type" value="mRNA"/>
</dbReference>
<dbReference type="RefSeq" id="XP_005550561.1">
    <molecule id="Q4R7I8-1"/>
    <property type="nucleotide sequence ID" value="XM_005550504.4"/>
</dbReference>
<dbReference type="BMRB" id="Q4R7I8"/>
<dbReference type="SMR" id="Q4R7I8"/>
<dbReference type="STRING" id="9541.ENSMFAP00000039542"/>
<dbReference type="Ensembl" id="ENSMFAT00000013828.2">
    <molecule id="Q4R7I8-2"/>
    <property type="protein sequence ID" value="ENSMFAP00000039565.2"/>
    <property type="gene ID" value="ENSMFAG00000045966.2"/>
</dbReference>
<dbReference type="GeneID" id="101866734"/>
<dbReference type="KEGG" id="mcf:101866734"/>
<dbReference type="CTD" id="79872"/>
<dbReference type="eggNOG" id="KOG2932">
    <property type="taxonomic scope" value="Eukaryota"/>
</dbReference>
<dbReference type="GeneTree" id="ENSGT00510000047522"/>
<dbReference type="UniPathway" id="UPA00143"/>
<dbReference type="Proteomes" id="UP000233100">
    <property type="component" value="Chromosome 3"/>
</dbReference>
<dbReference type="Bgee" id="ENSMFAG00000045966">
    <property type="expression patterns" value="Expressed in lymph node and 13 other cell types or tissues"/>
</dbReference>
<dbReference type="GO" id="GO:0005737">
    <property type="term" value="C:cytoplasm"/>
    <property type="evidence" value="ECO:0000250"/>
    <property type="project" value="UniProtKB"/>
</dbReference>
<dbReference type="GO" id="GO:0016607">
    <property type="term" value="C:nuclear speck"/>
    <property type="evidence" value="ECO:0007669"/>
    <property type="project" value="UniProtKB-SubCell"/>
</dbReference>
<dbReference type="GO" id="GO:0005634">
    <property type="term" value="C:nucleus"/>
    <property type="evidence" value="ECO:0000250"/>
    <property type="project" value="UniProtKB"/>
</dbReference>
<dbReference type="GO" id="GO:0036396">
    <property type="term" value="C:RNA N6-methyladenosine methyltransferase complex"/>
    <property type="evidence" value="ECO:0000250"/>
    <property type="project" value="UniProtKB"/>
</dbReference>
<dbReference type="GO" id="GO:0061630">
    <property type="term" value="F:ubiquitin protein ligase activity"/>
    <property type="evidence" value="ECO:0007669"/>
    <property type="project" value="InterPro"/>
</dbReference>
<dbReference type="GO" id="GO:0004842">
    <property type="term" value="F:ubiquitin-protein transferase activity"/>
    <property type="evidence" value="ECO:0000250"/>
    <property type="project" value="UniProtKB"/>
</dbReference>
<dbReference type="GO" id="GO:0008270">
    <property type="term" value="F:zinc ion binding"/>
    <property type="evidence" value="ECO:0007669"/>
    <property type="project" value="UniProtKB-KW"/>
</dbReference>
<dbReference type="GO" id="GO:0006397">
    <property type="term" value="P:mRNA processing"/>
    <property type="evidence" value="ECO:0000250"/>
    <property type="project" value="UniProtKB"/>
</dbReference>
<dbReference type="GO" id="GO:0007162">
    <property type="term" value="P:negative regulation of cell adhesion"/>
    <property type="evidence" value="ECO:0000250"/>
    <property type="project" value="UniProtKB"/>
</dbReference>
<dbReference type="GO" id="GO:0030335">
    <property type="term" value="P:positive regulation of cell migration"/>
    <property type="evidence" value="ECO:0000250"/>
    <property type="project" value="UniProtKB"/>
</dbReference>
<dbReference type="GO" id="GO:0045807">
    <property type="term" value="P:positive regulation of endocytosis"/>
    <property type="evidence" value="ECO:0000250"/>
    <property type="project" value="UniProtKB"/>
</dbReference>
<dbReference type="GO" id="GO:0016567">
    <property type="term" value="P:protein ubiquitination"/>
    <property type="evidence" value="ECO:0007669"/>
    <property type="project" value="UniProtKB-UniPathway"/>
</dbReference>
<dbReference type="CDD" id="cd16508">
    <property type="entry name" value="RING-HC_HAKAI-like"/>
    <property type="match status" value="1"/>
</dbReference>
<dbReference type="FunFam" id="3.30.40.10:FF:000140">
    <property type="entry name" value="E3 ubiquitin-protein ligase Hakai isoform X2"/>
    <property type="match status" value="1"/>
</dbReference>
<dbReference type="FunFam" id="6.10.140.2210:FF:000001">
    <property type="entry name" value="Putative e3 ubiquitin-protein ligase hakai"/>
    <property type="match status" value="1"/>
</dbReference>
<dbReference type="Gene3D" id="6.10.140.2210">
    <property type="match status" value="1"/>
</dbReference>
<dbReference type="Gene3D" id="3.30.40.10">
    <property type="entry name" value="Zinc/RING finger domain, C3HC4 (zinc finger)"/>
    <property type="match status" value="1"/>
</dbReference>
<dbReference type="InterPro" id="IPR040380">
    <property type="entry name" value="HAKAI-like_RING-HC"/>
</dbReference>
<dbReference type="InterPro" id="IPR040383">
    <property type="entry name" value="HAKAI/CBLL2"/>
</dbReference>
<dbReference type="InterPro" id="IPR041042">
    <property type="entry name" value="Znf_Hakai"/>
</dbReference>
<dbReference type="InterPro" id="IPR001841">
    <property type="entry name" value="Znf_RING"/>
</dbReference>
<dbReference type="InterPro" id="IPR013083">
    <property type="entry name" value="Znf_RING/FYVE/PHD"/>
</dbReference>
<dbReference type="InterPro" id="IPR017907">
    <property type="entry name" value="Znf_RING_CS"/>
</dbReference>
<dbReference type="PANTHER" id="PTHR13480:SF0">
    <property type="entry name" value="E3 UBIQUITIN-PROTEIN LIGASE HAKAI"/>
    <property type="match status" value="1"/>
</dbReference>
<dbReference type="PANTHER" id="PTHR13480">
    <property type="entry name" value="E3 UBIQUITIN-PROTEIN LIGASE HAKAI-RELATED"/>
    <property type="match status" value="1"/>
</dbReference>
<dbReference type="Pfam" id="PF18408">
    <property type="entry name" value="zf_Hakai"/>
    <property type="match status" value="1"/>
</dbReference>
<dbReference type="SUPFAM" id="SSF57850">
    <property type="entry name" value="RING/U-box"/>
    <property type="match status" value="1"/>
</dbReference>
<dbReference type="PROSITE" id="PS00518">
    <property type="entry name" value="ZF_RING_1"/>
    <property type="match status" value="1"/>
</dbReference>
<dbReference type="PROSITE" id="PS50089">
    <property type="entry name" value="ZF_RING_2"/>
    <property type="match status" value="1"/>
</dbReference>
<organism>
    <name type="scientific">Macaca fascicularis</name>
    <name type="common">Crab-eating macaque</name>
    <name type="synonym">Cynomolgus monkey</name>
    <dbReference type="NCBI Taxonomy" id="9541"/>
    <lineage>
        <taxon>Eukaryota</taxon>
        <taxon>Metazoa</taxon>
        <taxon>Chordata</taxon>
        <taxon>Craniata</taxon>
        <taxon>Vertebrata</taxon>
        <taxon>Euteleostomi</taxon>
        <taxon>Mammalia</taxon>
        <taxon>Eutheria</taxon>
        <taxon>Euarchontoglires</taxon>
        <taxon>Primates</taxon>
        <taxon>Haplorrhini</taxon>
        <taxon>Catarrhini</taxon>
        <taxon>Cercopithecidae</taxon>
        <taxon>Cercopithecinae</taxon>
        <taxon>Macaca</taxon>
    </lineage>
</organism>
<gene>
    <name evidence="2" type="primary">CBLL1</name>
    <name evidence="2" type="synonym">HAKAI</name>
    <name evidence="5" type="ORF">QtsA-15158</name>
    <name evidence="5" type="ORF">QtsA-17111</name>
</gene>